<organism>
    <name type="scientific">Achromobacter sp. (strain LBAA)</name>
    <dbReference type="NCBI Taxonomy" id="129026"/>
    <lineage>
        <taxon>Bacteria</taxon>
        <taxon>Pseudomonadati</taxon>
        <taxon>Pseudomonadota</taxon>
        <taxon>Betaproteobacteria</taxon>
        <taxon>Burkholderiales</taxon>
        <taxon>Alcaligenaceae</taxon>
        <taxon>Achromobacter</taxon>
    </lineage>
</organism>
<comment type="function">
    <text evidence="1">Catalyzes the transfer of the enolpyruvyl moiety of phosphoenolpyruvate (PEP) to the 5-hydroxyl of shikimate-3-phosphate (S3P) to produce enolpyruvyl shikimate-3-phosphate and inorganic phosphate.</text>
</comment>
<comment type="catalytic activity">
    <reaction evidence="1">
        <text>3-phosphoshikimate + phosphoenolpyruvate = 5-O-(1-carboxyvinyl)-3-phosphoshikimate + phosphate</text>
        <dbReference type="Rhea" id="RHEA:21256"/>
        <dbReference type="ChEBI" id="CHEBI:43474"/>
        <dbReference type="ChEBI" id="CHEBI:57701"/>
        <dbReference type="ChEBI" id="CHEBI:58702"/>
        <dbReference type="ChEBI" id="CHEBI:145989"/>
        <dbReference type="EC" id="2.5.1.19"/>
    </reaction>
    <physiologicalReaction direction="left-to-right" evidence="1">
        <dbReference type="Rhea" id="RHEA:21257"/>
    </physiologicalReaction>
</comment>
<comment type="pathway">
    <text evidence="1">Metabolic intermediate biosynthesis; chorismate biosynthesis; chorismate from D-erythrose 4-phosphate and phosphoenolpyruvate: step 6/7.</text>
</comment>
<comment type="subunit">
    <text evidence="1">Monomer.</text>
</comment>
<comment type="subcellular location">
    <subcellularLocation>
        <location evidence="1">Cytoplasm</location>
    </subcellularLocation>
</comment>
<comment type="miscellaneous">
    <text>Resistant to the antibiotic glyphosate.</text>
</comment>
<comment type="similarity">
    <text evidence="1 3">Belongs to the EPSP synthase family.</text>
</comment>
<keyword id="KW-0028">Amino-acid biosynthesis</keyword>
<keyword id="KW-0057">Aromatic amino acid biosynthesis</keyword>
<keyword id="KW-0963">Cytoplasm</keyword>
<keyword id="KW-0903">Direct protein sequencing</keyword>
<keyword id="KW-0359">Herbicide resistance</keyword>
<keyword id="KW-0808">Transferase</keyword>
<dbReference type="EC" id="2.5.1.19" evidence="1"/>
<dbReference type="SMR" id="P0A2Y5"/>
<dbReference type="UniPathway" id="UPA00053">
    <property type="reaction ID" value="UER00089"/>
</dbReference>
<dbReference type="GO" id="GO:0005737">
    <property type="term" value="C:cytoplasm"/>
    <property type="evidence" value="ECO:0007669"/>
    <property type="project" value="UniProtKB-SubCell"/>
</dbReference>
<dbReference type="GO" id="GO:0003866">
    <property type="term" value="F:3-phosphoshikimate 1-carboxyvinyltransferase activity"/>
    <property type="evidence" value="ECO:0007669"/>
    <property type="project" value="UniProtKB-UniRule"/>
</dbReference>
<dbReference type="GO" id="GO:0008652">
    <property type="term" value="P:amino acid biosynthetic process"/>
    <property type="evidence" value="ECO:0007669"/>
    <property type="project" value="UniProtKB-KW"/>
</dbReference>
<dbReference type="GO" id="GO:0009073">
    <property type="term" value="P:aromatic amino acid family biosynthetic process"/>
    <property type="evidence" value="ECO:0007669"/>
    <property type="project" value="UniProtKB-KW"/>
</dbReference>
<dbReference type="GO" id="GO:0009423">
    <property type="term" value="P:chorismate biosynthetic process"/>
    <property type="evidence" value="ECO:0007669"/>
    <property type="project" value="UniProtKB-UniRule"/>
</dbReference>
<dbReference type="GO" id="GO:0009635">
    <property type="term" value="P:response to herbicide"/>
    <property type="evidence" value="ECO:0007669"/>
    <property type="project" value="UniProtKB-KW"/>
</dbReference>
<dbReference type="CDD" id="cd01556">
    <property type="entry name" value="EPSP_synthase"/>
    <property type="match status" value="1"/>
</dbReference>
<dbReference type="FunFam" id="3.65.10.10:FF:000005">
    <property type="entry name" value="3-phosphoshikimate 1-carboxyvinyltransferase"/>
    <property type="match status" value="1"/>
</dbReference>
<dbReference type="FunFam" id="3.65.10.10:FF:000006">
    <property type="entry name" value="3-phosphoshikimate 1-carboxyvinyltransferase"/>
    <property type="match status" value="1"/>
</dbReference>
<dbReference type="Gene3D" id="3.65.10.10">
    <property type="entry name" value="Enolpyruvate transferase domain"/>
    <property type="match status" value="2"/>
</dbReference>
<dbReference type="HAMAP" id="MF_00210">
    <property type="entry name" value="EPSP_synth"/>
    <property type="match status" value="1"/>
</dbReference>
<dbReference type="InterPro" id="IPR001986">
    <property type="entry name" value="Enolpyruvate_Tfrase_dom"/>
</dbReference>
<dbReference type="InterPro" id="IPR036968">
    <property type="entry name" value="Enolpyruvate_Tfrase_sf"/>
</dbReference>
<dbReference type="InterPro" id="IPR006264">
    <property type="entry name" value="EPSP_synthase"/>
</dbReference>
<dbReference type="InterPro" id="IPR023193">
    <property type="entry name" value="EPSP_synthase_CS"/>
</dbReference>
<dbReference type="InterPro" id="IPR013792">
    <property type="entry name" value="RNA3'P_cycl/enolpyr_Trfase_a/b"/>
</dbReference>
<dbReference type="NCBIfam" id="TIGR01356">
    <property type="entry name" value="aroA"/>
    <property type="match status" value="1"/>
</dbReference>
<dbReference type="PANTHER" id="PTHR21090">
    <property type="entry name" value="AROM/DEHYDROQUINATE SYNTHASE"/>
    <property type="match status" value="1"/>
</dbReference>
<dbReference type="PANTHER" id="PTHR21090:SF5">
    <property type="entry name" value="PENTAFUNCTIONAL AROM POLYPEPTIDE"/>
    <property type="match status" value="1"/>
</dbReference>
<dbReference type="Pfam" id="PF00275">
    <property type="entry name" value="EPSP_synthase"/>
    <property type="match status" value="1"/>
</dbReference>
<dbReference type="PIRSF" id="PIRSF000505">
    <property type="entry name" value="EPSPS"/>
    <property type="match status" value="1"/>
</dbReference>
<dbReference type="SUPFAM" id="SSF55205">
    <property type="entry name" value="EPT/RTPC-like"/>
    <property type="match status" value="1"/>
</dbReference>
<dbReference type="PROSITE" id="PS00104">
    <property type="entry name" value="EPSP_SYNTHASE_1"/>
    <property type="match status" value="1"/>
</dbReference>
<dbReference type="PROSITE" id="PS00885">
    <property type="entry name" value="EPSP_SYNTHASE_2"/>
    <property type="match status" value="1"/>
</dbReference>
<gene>
    <name evidence="1" type="primary">aroA</name>
</gene>
<accession>P0A2Y5</accession>
<accession>P56952</accession>
<reference key="1">
    <citation type="patent" date="1997-05-27" number="US5633435">
        <title>Glyphosate-tolerant 5-enolpyruvylshikimate-3-phosphate synthases.</title>
        <authorList>
            <person name="Barry G.F."/>
            <person name="Kishore G.M."/>
            <person name="Padgette S.R."/>
            <person name="Stallings W.C."/>
        </authorList>
    </citation>
    <scope>NUCLEOTIDE SEQUENCE [GENOMIC DNA]</scope>
    <scope>PROTEIN SEQUENCE OF 2-16</scope>
</reference>
<evidence type="ECO:0000255" key="1">
    <source>
        <dbReference type="HAMAP-Rule" id="MF_00210"/>
    </source>
</evidence>
<evidence type="ECO:0000256" key="2">
    <source>
        <dbReference type="SAM" id="MobiDB-lite"/>
    </source>
</evidence>
<evidence type="ECO:0000305" key="3"/>
<name>AROA_ACHSL</name>
<sequence>MSHSASPKPATARRSEALTGEIRIPGDKSISHRSFMFGGLASGETRITGLLEGEDVINTGRAMQAMGAKIRKEGDVWIINGVGNGCLLQPEAALDFGNAGTGARLTMGLVGTYDMKTSFIGDASLSKRPMGRVLNPLREMGVQVEAADGDRMPLTLIGPKTANPITYRVPMASAQVKSAVLLAGLNTPGVTTVIEPVMTRDHTEKMLQGFGADLTVETDKDGVRHIRITGQGKLVGQTIDVPGDPSSTAFPLVAALLVEGSDVTIRNVLMNPTRTGLILTLQEMGADIEVLNARLAGGEDVADLRVRASKLKGVVVPPERAPSMIDEYPVLAIAASFAEGETVMDGLDELRVKESDRLAAVARGLEANGVDCTEGEMSLTVRGRPDGKGLGGGTVATHLDHRIAMSFLVMGLAAEKPVTVDDSNMIATSFPEFMDMMPGLGAKIELSIL</sequence>
<protein>
    <recommendedName>
        <fullName evidence="1">3-phosphoshikimate 1-carboxyvinyltransferase</fullName>
        <ecNumber evidence="1">2.5.1.19</ecNumber>
    </recommendedName>
    <alternativeName>
        <fullName evidence="1">5-enolpyruvylshikimate-3-phosphate synthase</fullName>
        <shortName evidence="1">EPSP synthase</shortName>
        <shortName evidence="1">EPSPS</shortName>
    </alternativeName>
</protein>
<proteinExistence type="evidence at protein level"/>
<feature type="chain" id="PRO_0000088213" description="3-phosphoshikimate 1-carboxyvinyltransferase">
    <location>
        <begin position="1"/>
        <end position="449"/>
    </location>
</feature>
<feature type="region of interest" description="Disordered" evidence="2">
    <location>
        <begin position="1"/>
        <end position="23"/>
    </location>
</feature>
<feature type="active site" description="Proton acceptor" evidence="1">
    <location>
        <position position="326"/>
    </location>
</feature>
<feature type="binding site" evidence="1">
    <location>
        <position position="28"/>
    </location>
    <ligand>
        <name>3-phosphoshikimate</name>
        <dbReference type="ChEBI" id="CHEBI:145989"/>
    </ligand>
</feature>
<feature type="binding site" evidence="1">
    <location>
        <position position="28"/>
    </location>
    <ligand>
        <name>phosphoenolpyruvate</name>
        <dbReference type="ChEBI" id="CHEBI:58702"/>
    </ligand>
</feature>
<feature type="binding site" evidence="1">
    <location>
        <position position="29"/>
    </location>
    <ligand>
        <name>3-phosphoshikimate</name>
        <dbReference type="ChEBI" id="CHEBI:145989"/>
    </ligand>
</feature>
<feature type="binding site" evidence="1">
    <location>
        <position position="33"/>
    </location>
    <ligand>
        <name>3-phosphoshikimate</name>
        <dbReference type="ChEBI" id="CHEBI:145989"/>
    </ligand>
</feature>
<feature type="binding site" evidence="1">
    <location>
        <position position="100"/>
    </location>
    <ligand>
        <name>phosphoenolpyruvate</name>
        <dbReference type="ChEBI" id="CHEBI:58702"/>
    </ligand>
</feature>
<feature type="binding site" evidence="1">
    <location>
        <position position="128"/>
    </location>
    <ligand>
        <name>phosphoenolpyruvate</name>
        <dbReference type="ChEBI" id="CHEBI:58702"/>
    </ligand>
</feature>
<feature type="binding site" evidence="1">
    <location>
        <position position="173"/>
    </location>
    <ligand>
        <name>3-phosphoshikimate</name>
        <dbReference type="ChEBI" id="CHEBI:145989"/>
    </ligand>
</feature>
<feature type="binding site" evidence="1">
    <location>
        <position position="175"/>
    </location>
    <ligand>
        <name>3-phosphoshikimate</name>
        <dbReference type="ChEBI" id="CHEBI:145989"/>
    </ligand>
</feature>
<feature type="binding site" evidence="1">
    <location>
        <position position="175"/>
    </location>
    <ligand>
        <name>phosphoenolpyruvate</name>
        <dbReference type="ChEBI" id="CHEBI:58702"/>
    </ligand>
</feature>
<feature type="binding site" evidence="1">
    <location>
        <position position="326"/>
    </location>
    <ligand>
        <name>3-phosphoshikimate</name>
        <dbReference type="ChEBI" id="CHEBI:145989"/>
    </ligand>
</feature>
<feature type="binding site" evidence="1">
    <location>
        <position position="353"/>
    </location>
    <ligand>
        <name>3-phosphoshikimate</name>
        <dbReference type="ChEBI" id="CHEBI:145989"/>
    </ligand>
</feature>
<feature type="binding site" evidence="1">
    <location>
        <position position="357"/>
    </location>
    <ligand>
        <name>phosphoenolpyruvate</name>
        <dbReference type="ChEBI" id="CHEBI:58702"/>
    </ligand>
</feature>
<feature type="binding site" evidence="1">
    <location>
        <position position="402"/>
    </location>
    <ligand>
        <name>phosphoenolpyruvate</name>
        <dbReference type="ChEBI" id="CHEBI:58702"/>
    </ligand>
</feature>